<keyword id="KW-0378">Hydrolase</keyword>
<keyword id="KW-0460">Magnesium</keyword>
<keyword id="KW-0479">Metal-binding</keyword>
<keyword id="KW-0546">Nucleotide metabolism</keyword>
<keyword id="KW-0547">Nucleotide-binding</keyword>
<keyword id="KW-1185">Reference proteome</keyword>
<comment type="function">
    <text evidence="1">Pyrophosphatase that catalyzes the hydrolysis of nucleoside triphosphates to their monophosphate derivatives, with a high preference for the non-canonical purine nucleotides XTP (xanthosine triphosphate), dITP (deoxyinosine triphosphate) and ITP. Seems to function as a house-cleaning enzyme that removes non-canonical purine nucleotides from the nucleotide pool, thus preventing their incorporation into DNA/RNA and avoiding chromosomal lesions.</text>
</comment>
<comment type="catalytic activity">
    <reaction evidence="1">
        <text>XTP + H2O = XMP + diphosphate + H(+)</text>
        <dbReference type="Rhea" id="RHEA:28610"/>
        <dbReference type="ChEBI" id="CHEBI:15377"/>
        <dbReference type="ChEBI" id="CHEBI:15378"/>
        <dbReference type="ChEBI" id="CHEBI:33019"/>
        <dbReference type="ChEBI" id="CHEBI:57464"/>
        <dbReference type="ChEBI" id="CHEBI:61314"/>
        <dbReference type="EC" id="3.6.1.66"/>
    </reaction>
</comment>
<comment type="catalytic activity">
    <reaction evidence="1">
        <text>dITP + H2O = dIMP + diphosphate + H(+)</text>
        <dbReference type="Rhea" id="RHEA:28342"/>
        <dbReference type="ChEBI" id="CHEBI:15377"/>
        <dbReference type="ChEBI" id="CHEBI:15378"/>
        <dbReference type="ChEBI" id="CHEBI:33019"/>
        <dbReference type="ChEBI" id="CHEBI:61194"/>
        <dbReference type="ChEBI" id="CHEBI:61382"/>
        <dbReference type="EC" id="3.6.1.66"/>
    </reaction>
</comment>
<comment type="catalytic activity">
    <reaction evidence="1">
        <text>ITP + H2O = IMP + diphosphate + H(+)</text>
        <dbReference type="Rhea" id="RHEA:29399"/>
        <dbReference type="ChEBI" id="CHEBI:15377"/>
        <dbReference type="ChEBI" id="CHEBI:15378"/>
        <dbReference type="ChEBI" id="CHEBI:33019"/>
        <dbReference type="ChEBI" id="CHEBI:58053"/>
        <dbReference type="ChEBI" id="CHEBI:61402"/>
        <dbReference type="EC" id="3.6.1.66"/>
    </reaction>
</comment>
<comment type="cofactor">
    <cofactor evidence="1">
        <name>Mg(2+)</name>
        <dbReference type="ChEBI" id="CHEBI:18420"/>
    </cofactor>
    <text evidence="1">Binds 1 Mg(2+) ion per subunit.</text>
</comment>
<comment type="subunit">
    <text evidence="1">Homodimer.</text>
</comment>
<comment type="similarity">
    <text evidence="1">Belongs to the HAM1 NTPase family.</text>
</comment>
<organism>
    <name type="scientific">Rhizobium meliloti (strain 1021)</name>
    <name type="common">Ensifer meliloti</name>
    <name type="synonym">Sinorhizobium meliloti</name>
    <dbReference type="NCBI Taxonomy" id="266834"/>
    <lineage>
        <taxon>Bacteria</taxon>
        <taxon>Pseudomonadati</taxon>
        <taxon>Pseudomonadota</taxon>
        <taxon>Alphaproteobacteria</taxon>
        <taxon>Hyphomicrobiales</taxon>
        <taxon>Rhizobiaceae</taxon>
        <taxon>Sinorhizobium/Ensifer group</taxon>
        <taxon>Sinorhizobium</taxon>
    </lineage>
</organism>
<reference key="1">
    <citation type="journal article" date="2001" name="Proc. Natl. Acad. Sci. U.S.A.">
        <title>Analysis of the chromosome sequence of the legume symbiont Sinorhizobium meliloti strain 1021.</title>
        <authorList>
            <person name="Capela D."/>
            <person name="Barloy-Hubler F."/>
            <person name="Gouzy J."/>
            <person name="Bothe G."/>
            <person name="Ampe F."/>
            <person name="Batut J."/>
            <person name="Boistard P."/>
            <person name="Becker A."/>
            <person name="Boutry M."/>
            <person name="Cadieu E."/>
            <person name="Dreano S."/>
            <person name="Gloux S."/>
            <person name="Godrie T."/>
            <person name="Goffeau A."/>
            <person name="Kahn D."/>
            <person name="Kiss E."/>
            <person name="Lelaure V."/>
            <person name="Masuy D."/>
            <person name="Pohl T."/>
            <person name="Portetelle D."/>
            <person name="Puehler A."/>
            <person name="Purnelle B."/>
            <person name="Ramsperger U."/>
            <person name="Renard C."/>
            <person name="Thebault P."/>
            <person name="Vandenbol M."/>
            <person name="Weidner S."/>
            <person name="Galibert F."/>
        </authorList>
    </citation>
    <scope>NUCLEOTIDE SEQUENCE [LARGE SCALE GENOMIC DNA]</scope>
    <source>
        <strain>1021</strain>
    </source>
</reference>
<reference key="2">
    <citation type="journal article" date="2001" name="Science">
        <title>The composite genome of the legume symbiont Sinorhizobium meliloti.</title>
        <authorList>
            <person name="Galibert F."/>
            <person name="Finan T.M."/>
            <person name="Long S.R."/>
            <person name="Puehler A."/>
            <person name="Abola P."/>
            <person name="Ampe F."/>
            <person name="Barloy-Hubler F."/>
            <person name="Barnett M.J."/>
            <person name="Becker A."/>
            <person name="Boistard P."/>
            <person name="Bothe G."/>
            <person name="Boutry M."/>
            <person name="Bowser L."/>
            <person name="Buhrmester J."/>
            <person name="Cadieu E."/>
            <person name="Capela D."/>
            <person name="Chain P."/>
            <person name="Cowie A."/>
            <person name="Davis R.W."/>
            <person name="Dreano S."/>
            <person name="Federspiel N.A."/>
            <person name="Fisher R.F."/>
            <person name="Gloux S."/>
            <person name="Godrie T."/>
            <person name="Goffeau A."/>
            <person name="Golding B."/>
            <person name="Gouzy J."/>
            <person name="Gurjal M."/>
            <person name="Hernandez-Lucas I."/>
            <person name="Hong A."/>
            <person name="Huizar L."/>
            <person name="Hyman R.W."/>
            <person name="Jones T."/>
            <person name="Kahn D."/>
            <person name="Kahn M.L."/>
            <person name="Kalman S."/>
            <person name="Keating D.H."/>
            <person name="Kiss E."/>
            <person name="Komp C."/>
            <person name="Lelaure V."/>
            <person name="Masuy D."/>
            <person name="Palm C."/>
            <person name="Peck M.C."/>
            <person name="Pohl T.M."/>
            <person name="Portetelle D."/>
            <person name="Purnelle B."/>
            <person name="Ramsperger U."/>
            <person name="Surzycki R."/>
            <person name="Thebault P."/>
            <person name="Vandenbol M."/>
            <person name="Vorhoelter F.J."/>
            <person name="Weidner S."/>
            <person name="Wells D.H."/>
            <person name="Wong K."/>
            <person name="Yeh K.-C."/>
            <person name="Batut J."/>
        </authorList>
    </citation>
    <scope>NUCLEOTIDE SEQUENCE [LARGE SCALE GENOMIC DNA]</scope>
    <source>
        <strain>1021</strain>
    </source>
</reference>
<dbReference type="EC" id="3.6.1.66" evidence="1"/>
<dbReference type="EMBL" id="AL591688">
    <property type="protein sequence ID" value="CAC41811.1"/>
    <property type="molecule type" value="Genomic_DNA"/>
</dbReference>
<dbReference type="RefSeq" id="NP_384480.1">
    <property type="nucleotide sequence ID" value="NC_003047.1"/>
</dbReference>
<dbReference type="SMR" id="Q92SK4"/>
<dbReference type="EnsemblBacteria" id="CAC41811">
    <property type="protein sequence ID" value="CAC41811"/>
    <property type="gene ID" value="SMc01146"/>
</dbReference>
<dbReference type="KEGG" id="sme:SMc01146"/>
<dbReference type="PATRIC" id="fig|266834.11.peg.1746"/>
<dbReference type="eggNOG" id="COG0127">
    <property type="taxonomic scope" value="Bacteria"/>
</dbReference>
<dbReference type="HOGENOM" id="CLU_082080_0_0_5"/>
<dbReference type="OrthoDB" id="9807456at2"/>
<dbReference type="Proteomes" id="UP000001976">
    <property type="component" value="Chromosome"/>
</dbReference>
<dbReference type="GO" id="GO:0005829">
    <property type="term" value="C:cytosol"/>
    <property type="evidence" value="ECO:0007669"/>
    <property type="project" value="TreeGrafter"/>
</dbReference>
<dbReference type="GO" id="GO:0035870">
    <property type="term" value="F:dITP diphosphatase activity"/>
    <property type="evidence" value="ECO:0007669"/>
    <property type="project" value="RHEA"/>
</dbReference>
<dbReference type="GO" id="GO:0036220">
    <property type="term" value="F:ITP diphosphatase activity"/>
    <property type="evidence" value="ECO:0007669"/>
    <property type="project" value="UniProtKB-EC"/>
</dbReference>
<dbReference type="GO" id="GO:0046872">
    <property type="term" value="F:metal ion binding"/>
    <property type="evidence" value="ECO:0007669"/>
    <property type="project" value="UniProtKB-KW"/>
</dbReference>
<dbReference type="GO" id="GO:0000166">
    <property type="term" value="F:nucleotide binding"/>
    <property type="evidence" value="ECO:0007669"/>
    <property type="project" value="UniProtKB-KW"/>
</dbReference>
<dbReference type="GO" id="GO:0017111">
    <property type="term" value="F:ribonucleoside triphosphate phosphatase activity"/>
    <property type="evidence" value="ECO:0007669"/>
    <property type="project" value="InterPro"/>
</dbReference>
<dbReference type="GO" id="GO:0036222">
    <property type="term" value="F:XTP diphosphatase activity"/>
    <property type="evidence" value="ECO:0007669"/>
    <property type="project" value="RHEA"/>
</dbReference>
<dbReference type="GO" id="GO:0009117">
    <property type="term" value="P:nucleotide metabolic process"/>
    <property type="evidence" value="ECO:0007669"/>
    <property type="project" value="UniProtKB-KW"/>
</dbReference>
<dbReference type="GO" id="GO:0009146">
    <property type="term" value="P:purine nucleoside triphosphate catabolic process"/>
    <property type="evidence" value="ECO:0007669"/>
    <property type="project" value="UniProtKB-UniRule"/>
</dbReference>
<dbReference type="CDD" id="cd00515">
    <property type="entry name" value="HAM1"/>
    <property type="match status" value="1"/>
</dbReference>
<dbReference type="FunFam" id="3.90.950.10:FF:000001">
    <property type="entry name" value="dITP/XTP pyrophosphatase"/>
    <property type="match status" value="1"/>
</dbReference>
<dbReference type="Gene3D" id="3.90.950.10">
    <property type="match status" value="1"/>
</dbReference>
<dbReference type="HAMAP" id="MF_01405">
    <property type="entry name" value="Non_canon_purine_NTPase"/>
    <property type="match status" value="1"/>
</dbReference>
<dbReference type="InterPro" id="IPR020922">
    <property type="entry name" value="dITP/XTP_pyrophosphatase"/>
</dbReference>
<dbReference type="InterPro" id="IPR029001">
    <property type="entry name" value="ITPase-like_fam"/>
</dbReference>
<dbReference type="InterPro" id="IPR002637">
    <property type="entry name" value="RdgB/HAM1"/>
</dbReference>
<dbReference type="NCBIfam" id="TIGR00042">
    <property type="entry name" value="RdgB/HAM1 family non-canonical purine NTP pyrophosphatase"/>
    <property type="match status" value="1"/>
</dbReference>
<dbReference type="PANTHER" id="PTHR11067:SF9">
    <property type="entry name" value="INOSINE TRIPHOSPHATE PYROPHOSPHATASE"/>
    <property type="match status" value="1"/>
</dbReference>
<dbReference type="PANTHER" id="PTHR11067">
    <property type="entry name" value="INOSINE TRIPHOSPHATE PYROPHOSPHATASE/HAM1 PROTEIN"/>
    <property type="match status" value="1"/>
</dbReference>
<dbReference type="Pfam" id="PF01725">
    <property type="entry name" value="Ham1p_like"/>
    <property type="match status" value="1"/>
</dbReference>
<dbReference type="SUPFAM" id="SSF52972">
    <property type="entry name" value="ITPase-like"/>
    <property type="match status" value="1"/>
</dbReference>
<feature type="chain" id="PRO_0000178218" description="dITP/XTP pyrophosphatase">
    <location>
        <begin position="1"/>
        <end position="214"/>
    </location>
</feature>
<feature type="active site" description="Proton acceptor" evidence="1">
    <location>
        <position position="74"/>
    </location>
</feature>
<feature type="binding site" evidence="1">
    <location>
        <begin position="13"/>
        <end position="18"/>
    </location>
    <ligand>
        <name>substrate</name>
    </ligand>
</feature>
<feature type="binding site" evidence="1">
    <location>
        <position position="45"/>
    </location>
    <ligand>
        <name>Mg(2+)</name>
        <dbReference type="ChEBI" id="CHEBI:18420"/>
    </ligand>
</feature>
<feature type="binding site" evidence="1">
    <location>
        <position position="74"/>
    </location>
    <ligand>
        <name>Mg(2+)</name>
        <dbReference type="ChEBI" id="CHEBI:18420"/>
    </ligand>
</feature>
<feature type="binding site" evidence="1">
    <location>
        <position position="75"/>
    </location>
    <ligand>
        <name>substrate</name>
    </ligand>
</feature>
<feature type="binding site" evidence="1">
    <location>
        <begin position="163"/>
        <end position="166"/>
    </location>
    <ligand>
        <name>substrate</name>
    </ligand>
</feature>
<feature type="binding site" evidence="1">
    <location>
        <position position="186"/>
    </location>
    <ligand>
        <name>substrate</name>
    </ligand>
</feature>
<feature type="binding site" evidence="1">
    <location>
        <begin position="199"/>
        <end position="200"/>
    </location>
    <ligand>
        <name>substrate</name>
    </ligand>
</feature>
<protein>
    <recommendedName>
        <fullName evidence="1">dITP/XTP pyrophosphatase</fullName>
        <ecNumber evidence="1">3.6.1.66</ecNumber>
    </recommendedName>
    <alternativeName>
        <fullName evidence="1">Non-canonical purine NTP pyrophosphatase</fullName>
    </alternativeName>
    <alternativeName>
        <fullName evidence="1">Non-standard purine NTP pyrophosphatase</fullName>
    </alternativeName>
    <alternativeName>
        <fullName evidence="1">Nucleoside-triphosphate diphosphatase</fullName>
    </alternativeName>
    <alternativeName>
        <fullName evidence="1">Nucleoside-triphosphate pyrophosphatase</fullName>
        <shortName evidence="1">NTPase</shortName>
    </alternativeName>
</protein>
<gene>
    <name type="ordered locus">R00374</name>
    <name type="ORF">SMc01146</name>
</gene>
<name>IXTPA_RHIME</name>
<accession>Q92SK4</accession>
<evidence type="ECO:0000255" key="1">
    <source>
        <dbReference type="HAMAP-Rule" id="MF_01405"/>
    </source>
</evidence>
<sequence>MRRLIDKTLVVASHNAGKIREIRDLIGPLGFEAKSAADLNFVEPDETGTTFEENATIKALASAKASGLPALSDDSGLAVDALGGAPGVYTANWAEREDGSRDFQMAMEKVEEALRAKGAVKPESRTARFVSVLCLAWPDGHVELFRGEVEGYVVWPPRGTSGFGYDPVFQPKGYDTTFGEMSAEEKHGWKPGDSEALSHRARAFKLFAETCLGA</sequence>
<proteinExistence type="inferred from homology"/>